<dbReference type="EMBL" id="AC006577">
    <property type="protein sequence ID" value="AAD25785.1"/>
    <property type="molecule type" value="Genomic_DNA"/>
</dbReference>
<dbReference type="EMBL" id="CP002684">
    <property type="protein sequence ID" value="AEE33051.1"/>
    <property type="molecule type" value="Genomic_DNA"/>
</dbReference>
<dbReference type="PIR" id="B96582">
    <property type="entry name" value="B96582"/>
</dbReference>
<dbReference type="RefSeq" id="NP_564650.1">
    <property type="nucleotide sequence ID" value="NM_104289.3"/>
</dbReference>
<dbReference type="FunCoup" id="Q9SYG9">
    <property type="interactions" value="1993"/>
</dbReference>
<dbReference type="STRING" id="3702.Q9SYG9"/>
<dbReference type="PaxDb" id="3702-AT1G54115.1"/>
<dbReference type="ProteomicsDB" id="223965"/>
<dbReference type="EnsemblPlants" id="AT1G54115.1">
    <property type="protein sequence ID" value="AT1G54115.1"/>
    <property type="gene ID" value="AT1G54115"/>
</dbReference>
<dbReference type="GeneID" id="841851"/>
<dbReference type="Gramene" id="AT1G54115.1">
    <property type="protein sequence ID" value="AT1G54115.1"/>
    <property type="gene ID" value="AT1G54115"/>
</dbReference>
<dbReference type="KEGG" id="ath:AT1G54115"/>
<dbReference type="Araport" id="AT1G54115"/>
<dbReference type="TAIR" id="AT1G54115">
    <property type="gene designation" value="CCX4"/>
</dbReference>
<dbReference type="eggNOG" id="KOG2399">
    <property type="taxonomic scope" value="Eukaryota"/>
</dbReference>
<dbReference type="HOGENOM" id="CLU_004979_1_1_1"/>
<dbReference type="InParanoid" id="Q9SYG9"/>
<dbReference type="OMA" id="IWIMNIA"/>
<dbReference type="OrthoDB" id="407410at2759"/>
<dbReference type="PhylomeDB" id="Q9SYG9"/>
<dbReference type="PRO" id="PR:Q9SYG9"/>
<dbReference type="Proteomes" id="UP000006548">
    <property type="component" value="Chromosome 1"/>
</dbReference>
<dbReference type="ExpressionAtlas" id="Q9SYG9">
    <property type="expression patterns" value="baseline and differential"/>
</dbReference>
<dbReference type="GO" id="GO:0016020">
    <property type="term" value="C:membrane"/>
    <property type="evidence" value="ECO:0007669"/>
    <property type="project" value="UniProtKB-SubCell"/>
</dbReference>
<dbReference type="GO" id="GO:0015297">
    <property type="term" value="F:antiporter activity"/>
    <property type="evidence" value="ECO:0007669"/>
    <property type="project" value="UniProtKB-KW"/>
</dbReference>
<dbReference type="GO" id="GO:0010150">
    <property type="term" value="P:leaf senescence"/>
    <property type="evidence" value="ECO:0000316"/>
    <property type="project" value="TAIR"/>
</dbReference>
<dbReference type="GO" id="GO:0006812">
    <property type="term" value="P:monoatomic cation transport"/>
    <property type="evidence" value="ECO:0000314"/>
    <property type="project" value="TAIR"/>
</dbReference>
<dbReference type="GO" id="GO:0006813">
    <property type="term" value="P:potassium ion transport"/>
    <property type="evidence" value="ECO:0007669"/>
    <property type="project" value="UniProtKB-KW"/>
</dbReference>
<dbReference type="GO" id="GO:0006814">
    <property type="term" value="P:sodium ion transport"/>
    <property type="evidence" value="ECO:0007669"/>
    <property type="project" value="UniProtKB-KW"/>
</dbReference>
<dbReference type="FunFam" id="1.20.1420.30:FF:000030">
    <property type="entry name" value="Cation/calcium exchanger 4"/>
    <property type="match status" value="1"/>
</dbReference>
<dbReference type="FunFam" id="1.20.1420.30:FF:000028">
    <property type="entry name" value="Cation/calcium exchanger 5"/>
    <property type="match status" value="1"/>
</dbReference>
<dbReference type="Gene3D" id="1.20.1420.30">
    <property type="entry name" value="NCX, central ion-binding region"/>
    <property type="match status" value="2"/>
</dbReference>
<dbReference type="InterPro" id="IPR051359">
    <property type="entry name" value="CaCA_antiporter"/>
</dbReference>
<dbReference type="InterPro" id="IPR004837">
    <property type="entry name" value="NaCa_Exmemb"/>
</dbReference>
<dbReference type="InterPro" id="IPR044880">
    <property type="entry name" value="NCX_ion-bd_dom_sf"/>
</dbReference>
<dbReference type="PANTHER" id="PTHR12266:SF0">
    <property type="entry name" value="MITOCHONDRIAL SODIUM_CALCIUM EXCHANGER PROTEIN"/>
    <property type="match status" value="1"/>
</dbReference>
<dbReference type="PANTHER" id="PTHR12266">
    <property type="entry name" value="NA+/CA2+ K+ INDEPENDENT EXCHANGER"/>
    <property type="match status" value="1"/>
</dbReference>
<dbReference type="Pfam" id="PF01699">
    <property type="entry name" value="Na_Ca_ex"/>
    <property type="match status" value="2"/>
</dbReference>
<gene>
    <name type="primary">CCX4</name>
    <name type="synonym">CAX10</name>
    <name type="ordered locus">At1g54115</name>
    <name type="ORF">F15I1.21</name>
</gene>
<comment type="function">
    <text evidence="1 3">Membrane-localized H(+)-dependent K(+) and Na(+) transporter.</text>
</comment>
<comment type="subcellular location">
    <subcellularLocation>
        <location evidence="1">Membrane</location>
        <topology evidence="1">Multi-pass membrane protein</topology>
    </subcellularLocation>
</comment>
<comment type="tissue specificity">
    <text evidence="3">Expressed in roots, leaves, stems, flowers and pollen.</text>
</comment>
<comment type="disruption phenotype">
    <text evidence="3">No visible phenotype.</text>
</comment>
<comment type="similarity">
    <text evidence="4">Belongs to the Ca(2+):cation antiporter (CaCA) (TC 2.A.19) family. Cation/calcium exchanger (CCX) subfamily.</text>
</comment>
<reference key="1">
    <citation type="journal article" date="2000" name="Nature">
        <title>Sequence and analysis of chromosome 1 of the plant Arabidopsis thaliana.</title>
        <authorList>
            <person name="Theologis A."/>
            <person name="Ecker J.R."/>
            <person name="Palm C.J."/>
            <person name="Federspiel N.A."/>
            <person name="Kaul S."/>
            <person name="White O."/>
            <person name="Alonso J."/>
            <person name="Altafi H."/>
            <person name="Araujo R."/>
            <person name="Bowman C.L."/>
            <person name="Brooks S.Y."/>
            <person name="Buehler E."/>
            <person name="Chan A."/>
            <person name="Chao Q."/>
            <person name="Chen H."/>
            <person name="Cheuk R.F."/>
            <person name="Chin C.W."/>
            <person name="Chung M.K."/>
            <person name="Conn L."/>
            <person name="Conway A.B."/>
            <person name="Conway A.R."/>
            <person name="Creasy T.H."/>
            <person name="Dewar K."/>
            <person name="Dunn P."/>
            <person name="Etgu P."/>
            <person name="Feldblyum T.V."/>
            <person name="Feng J.-D."/>
            <person name="Fong B."/>
            <person name="Fujii C.Y."/>
            <person name="Gill J.E."/>
            <person name="Goldsmith A.D."/>
            <person name="Haas B."/>
            <person name="Hansen N.F."/>
            <person name="Hughes B."/>
            <person name="Huizar L."/>
            <person name="Hunter J.L."/>
            <person name="Jenkins J."/>
            <person name="Johnson-Hopson C."/>
            <person name="Khan S."/>
            <person name="Khaykin E."/>
            <person name="Kim C.J."/>
            <person name="Koo H.L."/>
            <person name="Kremenetskaia I."/>
            <person name="Kurtz D.B."/>
            <person name="Kwan A."/>
            <person name="Lam B."/>
            <person name="Langin-Hooper S."/>
            <person name="Lee A."/>
            <person name="Lee J.M."/>
            <person name="Lenz C.A."/>
            <person name="Li J.H."/>
            <person name="Li Y.-P."/>
            <person name="Lin X."/>
            <person name="Liu S.X."/>
            <person name="Liu Z.A."/>
            <person name="Luros J.S."/>
            <person name="Maiti R."/>
            <person name="Marziali A."/>
            <person name="Militscher J."/>
            <person name="Miranda M."/>
            <person name="Nguyen M."/>
            <person name="Nierman W.C."/>
            <person name="Osborne B.I."/>
            <person name="Pai G."/>
            <person name="Peterson J."/>
            <person name="Pham P.K."/>
            <person name="Rizzo M."/>
            <person name="Rooney T."/>
            <person name="Rowley D."/>
            <person name="Sakano H."/>
            <person name="Salzberg S.L."/>
            <person name="Schwartz J.R."/>
            <person name="Shinn P."/>
            <person name="Southwick A.M."/>
            <person name="Sun H."/>
            <person name="Tallon L.J."/>
            <person name="Tambunga G."/>
            <person name="Toriumi M.J."/>
            <person name="Town C.D."/>
            <person name="Utterback T."/>
            <person name="Van Aken S."/>
            <person name="Vaysberg M."/>
            <person name="Vysotskaia V.S."/>
            <person name="Walker M."/>
            <person name="Wu D."/>
            <person name="Yu G."/>
            <person name="Fraser C.M."/>
            <person name="Venter J.C."/>
            <person name="Davis R.W."/>
        </authorList>
    </citation>
    <scope>NUCLEOTIDE SEQUENCE [LARGE SCALE GENOMIC DNA]</scope>
    <source>
        <strain>cv. Columbia</strain>
    </source>
</reference>
<reference key="2">
    <citation type="journal article" date="2017" name="Plant J.">
        <title>Araport11: a complete reannotation of the Arabidopsis thaliana reference genome.</title>
        <authorList>
            <person name="Cheng C.Y."/>
            <person name="Krishnakumar V."/>
            <person name="Chan A.P."/>
            <person name="Thibaud-Nissen F."/>
            <person name="Schobel S."/>
            <person name="Town C.D."/>
        </authorList>
    </citation>
    <scope>GENOME REANNOTATION</scope>
    <source>
        <strain>cv. Columbia</strain>
    </source>
</reference>
<reference key="3">
    <citation type="journal article" date="2001" name="Plant Physiol.">
        <title>Phylogenetic relationships within cation transporter families of Arabidopsis.</title>
        <authorList>
            <person name="Maeser P."/>
            <person name="Thomine S."/>
            <person name="Schroeder J.I."/>
            <person name="Ward J.M."/>
            <person name="Hirschi K."/>
            <person name="Sze H."/>
            <person name="Talke I.N."/>
            <person name="Amtmann A."/>
            <person name="Maathuis F.J.M."/>
            <person name="Sanders D."/>
            <person name="Harper J.F."/>
            <person name="Tchieu J."/>
            <person name="Gribskov M."/>
            <person name="Persans M.W."/>
            <person name="Salt D.E."/>
            <person name="Kim S.A."/>
            <person name="Guerinot M.L."/>
        </authorList>
    </citation>
    <scope>GENE FAMILY</scope>
    <scope>NOMENCLATURE</scope>
</reference>
<reference key="4">
    <citation type="journal article" date="2008" name="Plant Physiol.">
        <title>AtCCX3 is an Arabidopsis endomembrane H+ -dependent K+ transporter.</title>
        <authorList>
            <person name="Morris J."/>
            <person name="Tian H."/>
            <person name="Park S."/>
            <person name="Sreevidya C.S."/>
            <person name="Ward J.M."/>
            <person name="Hirschi K.D."/>
        </authorList>
    </citation>
    <scope>FUNCTION</scope>
    <scope>DISRUPTION PHENOTYPE</scope>
    <scope>TISSUE SPECIFICITY</scope>
</reference>
<keyword id="KW-0050">Antiport</keyword>
<keyword id="KW-0406">Ion transport</keyword>
<keyword id="KW-0472">Membrane</keyword>
<keyword id="KW-0630">Potassium</keyword>
<keyword id="KW-0633">Potassium transport</keyword>
<keyword id="KW-1185">Reference proteome</keyword>
<keyword id="KW-0915">Sodium</keyword>
<keyword id="KW-0739">Sodium transport</keyword>
<keyword id="KW-0812">Transmembrane</keyword>
<keyword id="KW-1133">Transmembrane helix</keyword>
<keyword id="KW-0813">Transport</keyword>
<evidence type="ECO:0000250" key="1"/>
<evidence type="ECO:0000255" key="2"/>
<evidence type="ECO:0000269" key="3">
    <source>
    </source>
</evidence>
<evidence type="ECO:0000305" key="4"/>
<organism>
    <name type="scientific">Arabidopsis thaliana</name>
    <name type="common">Mouse-ear cress</name>
    <dbReference type="NCBI Taxonomy" id="3702"/>
    <lineage>
        <taxon>Eukaryota</taxon>
        <taxon>Viridiplantae</taxon>
        <taxon>Streptophyta</taxon>
        <taxon>Embryophyta</taxon>
        <taxon>Tracheophyta</taxon>
        <taxon>Spermatophyta</taxon>
        <taxon>Magnoliopsida</taxon>
        <taxon>eudicotyledons</taxon>
        <taxon>Gunneridae</taxon>
        <taxon>Pentapetalae</taxon>
        <taxon>rosids</taxon>
        <taxon>malvids</taxon>
        <taxon>Brassicales</taxon>
        <taxon>Brassicaceae</taxon>
        <taxon>Camelineae</taxon>
        <taxon>Arabidopsis</taxon>
    </lineage>
</organism>
<proteinExistence type="evidence at transcript level"/>
<feature type="chain" id="PRO_0000378326" description="Cation/calcium exchanger 4">
    <location>
        <begin position="1"/>
        <end position="644"/>
    </location>
</feature>
<feature type="transmembrane region" description="Helical" evidence="2">
    <location>
        <begin position="17"/>
        <end position="37"/>
    </location>
</feature>
<feature type="transmembrane region" description="Helical" evidence="2">
    <location>
        <begin position="132"/>
        <end position="152"/>
    </location>
</feature>
<feature type="transmembrane region" description="Helical" evidence="2">
    <location>
        <begin position="179"/>
        <end position="199"/>
    </location>
</feature>
<feature type="transmembrane region" description="Helical" evidence="2">
    <location>
        <begin position="211"/>
        <end position="231"/>
    </location>
</feature>
<feature type="transmembrane region" description="Helical" evidence="2">
    <location>
        <begin position="241"/>
        <end position="263"/>
    </location>
</feature>
<feature type="transmembrane region" description="Helical" evidence="2">
    <location>
        <begin position="268"/>
        <end position="290"/>
    </location>
</feature>
<feature type="transmembrane region" description="Helical" evidence="2">
    <location>
        <begin position="414"/>
        <end position="434"/>
    </location>
</feature>
<feature type="transmembrane region" description="Helical" evidence="2">
    <location>
        <begin position="444"/>
        <end position="464"/>
    </location>
</feature>
<feature type="transmembrane region" description="Helical" evidence="2">
    <location>
        <begin position="475"/>
        <end position="495"/>
    </location>
</feature>
<feature type="transmembrane region" description="Helical" evidence="2">
    <location>
        <begin position="499"/>
        <end position="519"/>
    </location>
</feature>
<feature type="transmembrane region" description="Helical" evidence="2">
    <location>
        <begin position="553"/>
        <end position="573"/>
    </location>
</feature>
<feature type="transmembrane region" description="Helical" evidence="2">
    <location>
        <begin position="587"/>
        <end position="607"/>
    </location>
</feature>
<feature type="transmembrane region" description="Helical" evidence="2">
    <location>
        <begin position="619"/>
        <end position="639"/>
    </location>
</feature>
<name>CCX4_ARATH</name>
<sequence length="644" mass="70801">MRAVNFMYSSNNPKFRGIFNGLCAIILFIFFFDQSDIYRNPLLKNLSFVDSSGKFNRGFSQFTVPRRHLSEVDTNGSSGNSSLSGDSTVSCSGLHEHRGYADQCEFLKSNPICSPDGFFDYLKFFYCSCRDFKILGYILLGVWLVALFYLLGNTAADYFCCSLEKLSKLLRLPPTVAGVTLLPLGNGAPDVFASIAAFVGSDKGEVGLNSVLGGAVFVTCVVVGIVSLCVADKEVKIDKKCFIRDLSFFLFTLVALMVILMVGKVTVGIAIAFVSIYVFYASLVAANEILRKHSRRLKLDSITPLLPMQGSVFSSPSVEEDIPMYSPLMELDTGEGPPRLHDSLPQWMWATNVAIYSNHFAKANVHDEERPPWGWTEDGAEVESSLCSKITSLLETPLTVPRRLTIPLIEEDSWSKTYAVASVSLAPVLLSFLWSSQDDTSLQARIVAYFIGIAIGSTLGYLAFKNTEPDRPPQIYLIPWVLGGFIMSIVWFYMIANELVALLVTFGGIYGINPSILGLTVLAWGNSMGDLVSNIALSMNGGDGVQIALSGCYAGPMFNTLVGLGMSMFLGAWSKSPETYMIPEDNSLFYTLGFLIFGLIWSLVMLPRNEMRPNKVMGIGLITLYLIFVTFRLSSAMGFIPWAS</sequence>
<protein>
    <recommendedName>
        <fullName>Cation/calcium exchanger 4</fullName>
        <shortName>AtCCX4</shortName>
    </recommendedName>
    <alternativeName>
        <fullName>Protein CATION CALCIUM EXCHANGER 4</fullName>
    </alternativeName>
    <alternativeName>
        <fullName>Protein CATION EXCHANGER 10</fullName>
    </alternativeName>
</protein>
<accession>Q9SYG9</accession>